<sequence>MKTLILLIQFFTRIPIPIAINMDEVNLKKGSALLPFVGLIIGAWNWLVFTLVALVMPLPVAIIAGLFAEIIITGGFHVDALADTADGLFSSRKKERMLEIMKDSRVGANGVIAICFYFLFYGALFLSVPSAYEIGWLFFVLPIVAKGVTMLLFAKMTYAGSNEGLGSIFLGVPWWPIAISQLFVLFILGLVFSYIGLLAYAGVILFTIIYRTFVYKRIGGMNGDTLGAGGQMGQLVCLFCLVLVWGLI</sequence>
<dbReference type="EC" id="2.7.8.26" evidence="1"/>
<dbReference type="EMBL" id="AM263198">
    <property type="protein sequence ID" value="CAK20524.1"/>
    <property type="molecule type" value="Genomic_DNA"/>
</dbReference>
<dbReference type="RefSeq" id="WP_011701925.1">
    <property type="nucleotide sequence ID" value="NC_008555.1"/>
</dbReference>
<dbReference type="STRING" id="386043.lwe1106"/>
<dbReference type="GeneID" id="61188989"/>
<dbReference type="KEGG" id="lwe:lwe1106"/>
<dbReference type="eggNOG" id="COG0368">
    <property type="taxonomic scope" value="Bacteria"/>
</dbReference>
<dbReference type="HOGENOM" id="CLU_057426_1_2_9"/>
<dbReference type="OrthoDB" id="9794626at2"/>
<dbReference type="UniPathway" id="UPA00148">
    <property type="reaction ID" value="UER00238"/>
</dbReference>
<dbReference type="Proteomes" id="UP000000779">
    <property type="component" value="Chromosome"/>
</dbReference>
<dbReference type="GO" id="GO:0005886">
    <property type="term" value="C:plasma membrane"/>
    <property type="evidence" value="ECO:0007669"/>
    <property type="project" value="UniProtKB-SubCell"/>
</dbReference>
<dbReference type="GO" id="GO:0051073">
    <property type="term" value="F:adenosylcobinamide-GDP ribazoletransferase activity"/>
    <property type="evidence" value="ECO:0007669"/>
    <property type="project" value="UniProtKB-UniRule"/>
</dbReference>
<dbReference type="GO" id="GO:0008818">
    <property type="term" value="F:cobalamin 5'-phosphate synthase activity"/>
    <property type="evidence" value="ECO:0007669"/>
    <property type="project" value="UniProtKB-UniRule"/>
</dbReference>
<dbReference type="GO" id="GO:0009236">
    <property type="term" value="P:cobalamin biosynthetic process"/>
    <property type="evidence" value="ECO:0007669"/>
    <property type="project" value="UniProtKB-UniRule"/>
</dbReference>
<dbReference type="HAMAP" id="MF_00719">
    <property type="entry name" value="CobS"/>
    <property type="match status" value="1"/>
</dbReference>
<dbReference type="InterPro" id="IPR003805">
    <property type="entry name" value="CobS"/>
</dbReference>
<dbReference type="NCBIfam" id="TIGR00317">
    <property type="entry name" value="cobS"/>
    <property type="match status" value="1"/>
</dbReference>
<dbReference type="PANTHER" id="PTHR34148">
    <property type="entry name" value="ADENOSYLCOBINAMIDE-GDP RIBAZOLETRANSFERASE"/>
    <property type="match status" value="1"/>
</dbReference>
<dbReference type="PANTHER" id="PTHR34148:SF1">
    <property type="entry name" value="ADENOSYLCOBINAMIDE-GDP RIBAZOLETRANSFERASE"/>
    <property type="match status" value="1"/>
</dbReference>
<dbReference type="Pfam" id="PF02654">
    <property type="entry name" value="CobS"/>
    <property type="match status" value="1"/>
</dbReference>
<accession>A0AHP2</accession>
<gene>
    <name evidence="1" type="primary">cobS</name>
    <name type="ordered locus">lwe1106</name>
</gene>
<comment type="function">
    <text evidence="1">Joins adenosylcobinamide-GDP and alpha-ribazole to generate adenosylcobalamin (Ado-cobalamin). Also synthesizes adenosylcobalamin 5'-phosphate from adenosylcobinamide-GDP and alpha-ribazole 5'-phosphate.</text>
</comment>
<comment type="catalytic activity">
    <reaction evidence="1">
        <text>alpha-ribazole + adenosylcob(III)inamide-GDP = adenosylcob(III)alamin + GMP + H(+)</text>
        <dbReference type="Rhea" id="RHEA:16049"/>
        <dbReference type="ChEBI" id="CHEBI:10329"/>
        <dbReference type="ChEBI" id="CHEBI:15378"/>
        <dbReference type="ChEBI" id="CHEBI:18408"/>
        <dbReference type="ChEBI" id="CHEBI:58115"/>
        <dbReference type="ChEBI" id="CHEBI:60487"/>
        <dbReference type="EC" id="2.7.8.26"/>
    </reaction>
</comment>
<comment type="catalytic activity">
    <reaction evidence="1">
        <text>alpha-ribazole 5'-phosphate + adenosylcob(III)inamide-GDP = adenosylcob(III)alamin 5'-phosphate + GMP + H(+)</text>
        <dbReference type="Rhea" id="RHEA:23560"/>
        <dbReference type="ChEBI" id="CHEBI:15378"/>
        <dbReference type="ChEBI" id="CHEBI:57918"/>
        <dbReference type="ChEBI" id="CHEBI:58115"/>
        <dbReference type="ChEBI" id="CHEBI:60487"/>
        <dbReference type="ChEBI" id="CHEBI:60493"/>
        <dbReference type="EC" id="2.7.8.26"/>
    </reaction>
</comment>
<comment type="cofactor">
    <cofactor evidence="1">
        <name>Mg(2+)</name>
        <dbReference type="ChEBI" id="CHEBI:18420"/>
    </cofactor>
</comment>
<comment type="pathway">
    <text evidence="1">Cofactor biosynthesis; adenosylcobalamin biosynthesis; adenosylcobalamin from cob(II)yrinate a,c-diamide: step 7/7.</text>
</comment>
<comment type="subcellular location">
    <subcellularLocation>
        <location evidence="1">Cell membrane</location>
        <topology evidence="1">Multi-pass membrane protein</topology>
    </subcellularLocation>
</comment>
<comment type="similarity">
    <text evidence="1">Belongs to the CobS family.</text>
</comment>
<name>COBS_LISW6</name>
<feature type="chain" id="PRO_1000045773" description="Adenosylcobinamide-GDP ribazoletransferase">
    <location>
        <begin position="1"/>
        <end position="248"/>
    </location>
</feature>
<feature type="transmembrane region" description="Helical" evidence="1">
    <location>
        <begin position="24"/>
        <end position="44"/>
    </location>
</feature>
<feature type="transmembrane region" description="Helical" evidence="1">
    <location>
        <begin position="47"/>
        <end position="67"/>
    </location>
</feature>
<feature type="transmembrane region" description="Helical" evidence="1">
    <location>
        <begin position="70"/>
        <end position="90"/>
    </location>
</feature>
<feature type="transmembrane region" description="Helical" evidence="1">
    <location>
        <begin position="106"/>
        <end position="126"/>
    </location>
</feature>
<feature type="transmembrane region" description="Helical" evidence="1">
    <location>
        <begin position="134"/>
        <end position="154"/>
    </location>
</feature>
<feature type="transmembrane region" description="Helical" evidence="1">
    <location>
        <begin position="165"/>
        <end position="185"/>
    </location>
</feature>
<feature type="transmembrane region" description="Helical" evidence="1">
    <location>
        <begin position="186"/>
        <end position="206"/>
    </location>
</feature>
<feature type="transmembrane region" description="Helical" evidence="1">
    <location>
        <begin position="228"/>
        <end position="248"/>
    </location>
</feature>
<organism>
    <name type="scientific">Listeria welshimeri serovar 6b (strain ATCC 35897 / DSM 20650 / CCUG 15529 / CIP 8149 / NCTC 11857 / SLCC 5334 / V8)</name>
    <dbReference type="NCBI Taxonomy" id="386043"/>
    <lineage>
        <taxon>Bacteria</taxon>
        <taxon>Bacillati</taxon>
        <taxon>Bacillota</taxon>
        <taxon>Bacilli</taxon>
        <taxon>Bacillales</taxon>
        <taxon>Listeriaceae</taxon>
        <taxon>Listeria</taxon>
    </lineage>
</organism>
<reference key="1">
    <citation type="journal article" date="2006" name="J. Bacteriol.">
        <title>Whole-genome sequence of Listeria welshimeri reveals common steps in genome reduction with Listeria innocua as compared to Listeria monocytogenes.</title>
        <authorList>
            <person name="Hain T."/>
            <person name="Steinweg C."/>
            <person name="Kuenne C.T."/>
            <person name="Billion A."/>
            <person name="Ghai R."/>
            <person name="Chatterjee S.S."/>
            <person name="Domann E."/>
            <person name="Kaerst U."/>
            <person name="Goesmann A."/>
            <person name="Bekel T."/>
            <person name="Bartels D."/>
            <person name="Kaiser O."/>
            <person name="Meyer F."/>
            <person name="Puehler A."/>
            <person name="Weisshaar B."/>
            <person name="Wehland J."/>
            <person name="Liang C."/>
            <person name="Dandekar T."/>
            <person name="Lampidis R."/>
            <person name="Kreft J."/>
            <person name="Goebel W."/>
            <person name="Chakraborty T."/>
        </authorList>
    </citation>
    <scope>NUCLEOTIDE SEQUENCE [LARGE SCALE GENOMIC DNA]</scope>
    <source>
        <strain>ATCC 35897 / DSM 20650 / CCUG 15529 / CIP 8149 / NCTC 11857 / SLCC 5334 / V8</strain>
    </source>
</reference>
<evidence type="ECO:0000255" key="1">
    <source>
        <dbReference type="HAMAP-Rule" id="MF_00719"/>
    </source>
</evidence>
<keyword id="KW-1003">Cell membrane</keyword>
<keyword id="KW-0169">Cobalamin biosynthesis</keyword>
<keyword id="KW-0460">Magnesium</keyword>
<keyword id="KW-0472">Membrane</keyword>
<keyword id="KW-0808">Transferase</keyword>
<keyword id="KW-0812">Transmembrane</keyword>
<keyword id="KW-1133">Transmembrane helix</keyword>
<protein>
    <recommendedName>
        <fullName evidence="1">Adenosylcobinamide-GDP ribazoletransferase</fullName>
        <ecNumber evidence="1">2.7.8.26</ecNumber>
    </recommendedName>
    <alternativeName>
        <fullName evidence="1">Cobalamin synthase</fullName>
    </alternativeName>
    <alternativeName>
        <fullName evidence="1">Cobalamin-5'-phosphate synthase</fullName>
    </alternativeName>
</protein>
<proteinExistence type="inferred from homology"/>